<reference key="1">
    <citation type="journal article" date="2000" name="Nature">
        <title>The genome sequence of the food-borne pathogen Campylobacter jejuni reveals hypervariable sequences.</title>
        <authorList>
            <person name="Parkhill J."/>
            <person name="Wren B.W."/>
            <person name="Mungall K.L."/>
            <person name="Ketley J.M."/>
            <person name="Churcher C.M."/>
            <person name="Basham D."/>
            <person name="Chillingworth T."/>
            <person name="Davies R.M."/>
            <person name="Feltwell T."/>
            <person name="Holroyd S."/>
            <person name="Jagels K."/>
            <person name="Karlyshev A.V."/>
            <person name="Moule S."/>
            <person name="Pallen M.J."/>
            <person name="Penn C.W."/>
            <person name="Quail M.A."/>
            <person name="Rajandream M.A."/>
            <person name="Rutherford K.M."/>
            <person name="van Vliet A.H.M."/>
            <person name="Whitehead S."/>
            <person name="Barrell B.G."/>
        </authorList>
    </citation>
    <scope>NUCLEOTIDE SEQUENCE [LARGE SCALE GENOMIC DNA]</scope>
    <source>
        <strain>ATCC 700819 / NCTC 11168</strain>
    </source>
</reference>
<proteinExistence type="inferred from homology"/>
<comment type="function">
    <text evidence="1">Catalyzes the reduction of the glycolytic intermediate dihydroxyacetone phosphate (DHAP) to sn-glycerol 3-phosphate (G3P), the key precursor for phospholipid synthesis.</text>
</comment>
<comment type="catalytic activity">
    <reaction evidence="1">
        <text>sn-glycerol 3-phosphate + NAD(+) = dihydroxyacetone phosphate + NADH + H(+)</text>
        <dbReference type="Rhea" id="RHEA:11092"/>
        <dbReference type="ChEBI" id="CHEBI:15378"/>
        <dbReference type="ChEBI" id="CHEBI:57540"/>
        <dbReference type="ChEBI" id="CHEBI:57597"/>
        <dbReference type="ChEBI" id="CHEBI:57642"/>
        <dbReference type="ChEBI" id="CHEBI:57945"/>
        <dbReference type="EC" id="1.1.1.94"/>
    </reaction>
    <physiologicalReaction direction="right-to-left" evidence="1">
        <dbReference type="Rhea" id="RHEA:11094"/>
    </physiologicalReaction>
</comment>
<comment type="catalytic activity">
    <reaction evidence="1">
        <text>sn-glycerol 3-phosphate + NADP(+) = dihydroxyacetone phosphate + NADPH + H(+)</text>
        <dbReference type="Rhea" id="RHEA:11096"/>
        <dbReference type="ChEBI" id="CHEBI:15378"/>
        <dbReference type="ChEBI" id="CHEBI:57597"/>
        <dbReference type="ChEBI" id="CHEBI:57642"/>
        <dbReference type="ChEBI" id="CHEBI:57783"/>
        <dbReference type="ChEBI" id="CHEBI:58349"/>
        <dbReference type="EC" id="1.1.1.94"/>
    </reaction>
    <physiologicalReaction direction="right-to-left" evidence="1">
        <dbReference type="Rhea" id="RHEA:11098"/>
    </physiologicalReaction>
</comment>
<comment type="pathway">
    <text evidence="1">Membrane lipid metabolism; glycerophospholipid metabolism.</text>
</comment>
<comment type="subcellular location">
    <subcellularLocation>
        <location evidence="1">Cytoplasm</location>
    </subcellularLocation>
</comment>
<comment type="similarity">
    <text evidence="1">Belongs to the NAD-dependent glycerol-3-phosphate dehydrogenase family.</text>
</comment>
<comment type="sequence caution" evidence="2">
    <conflict type="erroneous initiation">
        <sequence resource="EMBL-CDS" id="CAL35311"/>
    </conflict>
</comment>
<feature type="chain" id="PRO_0000137938" description="Glycerol-3-phosphate dehydrogenase [NAD(P)+]">
    <location>
        <begin position="1"/>
        <end position="297"/>
    </location>
</feature>
<feature type="active site" description="Proton acceptor" evidence="1">
    <location>
        <position position="161"/>
    </location>
</feature>
<feature type="binding site" evidence="1">
    <location>
        <position position="11"/>
    </location>
    <ligand>
        <name>NADPH</name>
        <dbReference type="ChEBI" id="CHEBI:57783"/>
    </ligand>
</feature>
<feature type="binding site" evidence="1">
    <location>
        <position position="33"/>
    </location>
    <ligand>
        <name>NADPH</name>
        <dbReference type="ChEBI" id="CHEBI:57783"/>
    </ligand>
</feature>
<feature type="binding site" evidence="1">
    <location>
        <position position="79"/>
    </location>
    <ligand>
        <name>NADPH</name>
        <dbReference type="ChEBI" id="CHEBI:57783"/>
    </ligand>
</feature>
<feature type="binding site" evidence="1">
    <location>
        <position position="79"/>
    </location>
    <ligand>
        <name>sn-glycerol 3-phosphate</name>
        <dbReference type="ChEBI" id="CHEBI:57597"/>
    </ligand>
</feature>
<feature type="binding site" evidence="1">
    <location>
        <position position="107"/>
    </location>
    <ligand>
        <name>sn-glycerol 3-phosphate</name>
        <dbReference type="ChEBI" id="CHEBI:57597"/>
    </ligand>
</feature>
<feature type="binding site" evidence="1">
    <location>
        <position position="109"/>
    </location>
    <ligand>
        <name>sn-glycerol 3-phosphate</name>
        <dbReference type="ChEBI" id="CHEBI:57597"/>
    </ligand>
</feature>
<feature type="binding site" evidence="1">
    <location>
        <position position="111"/>
    </location>
    <ligand>
        <name>NADPH</name>
        <dbReference type="ChEBI" id="CHEBI:57783"/>
    </ligand>
</feature>
<feature type="binding site" evidence="1">
    <location>
        <position position="161"/>
    </location>
    <ligand>
        <name>sn-glycerol 3-phosphate</name>
        <dbReference type="ChEBI" id="CHEBI:57597"/>
    </ligand>
</feature>
<feature type="binding site" evidence="1">
    <location>
        <position position="214"/>
    </location>
    <ligand>
        <name>sn-glycerol 3-phosphate</name>
        <dbReference type="ChEBI" id="CHEBI:57597"/>
    </ligand>
</feature>
<feature type="binding site" evidence="1">
    <location>
        <position position="224"/>
    </location>
    <ligand>
        <name>sn-glycerol 3-phosphate</name>
        <dbReference type="ChEBI" id="CHEBI:57597"/>
    </ligand>
</feature>
<feature type="binding site" evidence="1">
    <location>
        <position position="225"/>
    </location>
    <ligand>
        <name>NADPH</name>
        <dbReference type="ChEBI" id="CHEBI:57783"/>
    </ligand>
</feature>
<feature type="binding site" evidence="1">
    <location>
        <position position="225"/>
    </location>
    <ligand>
        <name>sn-glycerol 3-phosphate</name>
        <dbReference type="ChEBI" id="CHEBI:57597"/>
    </ligand>
</feature>
<feature type="binding site" evidence="1">
    <location>
        <position position="226"/>
    </location>
    <ligand>
        <name>sn-glycerol 3-phosphate</name>
        <dbReference type="ChEBI" id="CHEBI:57597"/>
    </ligand>
</feature>
<feature type="binding site" evidence="1">
    <location>
        <position position="249"/>
    </location>
    <ligand>
        <name>NADPH</name>
        <dbReference type="ChEBI" id="CHEBI:57783"/>
    </ligand>
</feature>
<feature type="binding site" evidence="1">
    <location>
        <position position="251"/>
    </location>
    <ligand>
        <name>NADPH</name>
        <dbReference type="ChEBI" id="CHEBI:57783"/>
    </ligand>
</feature>
<evidence type="ECO:0000255" key="1">
    <source>
        <dbReference type="HAMAP-Rule" id="MF_00394"/>
    </source>
</evidence>
<evidence type="ECO:0000305" key="2"/>
<protein>
    <recommendedName>
        <fullName evidence="1">Glycerol-3-phosphate dehydrogenase [NAD(P)+]</fullName>
        <ecNumber evidence="1">1.1.1.94</ecNumber>
    </recommendedName>
    <alternativeName>
        <fullName evidence="1">NAD(P)(+)-dependent glycerol-3-phosphate dehydrogenase</fullName>
    </alternativeName>
    <alternativeName>
        <fullName evidence="1">NAD(P)H-dependent dihydroxyacetone-phosphate reductase</fullName>
    </alternativeName>
</protein>
<name>GPDA_CAMJE</name>
<gene>
    <name evidence="1" type="primary">gpsA</name>
    <name type="ordered locus">Cj1196c</name>
</gene>
<sequence length="297" mass="32733">MRIAVIGAGKWGSALHLALKENHNCFISSLHQRDLEDFVSIKEALECEYLVFALSSQGMRAWLKENFINKGQKILIASKGIEDQSCQFLDEIFLDFVPKENFCVLSGPSFAAEVMQKLPTALMISGINQELCKKFASFFPDFIKTYIDNDVRGAEICGAYKNVLAIASGISDGLKLGNNARAALISRGLIEMHRFGKFFGTKEETFLGLSGAGDLFLTATSVLSRNYRVGLKLAQNQKLDSILAELNEVAEGVKTAYAIEKLAKMKGIYTPIVNEVVAIFKGKSVQEATQNLLKQND</sequence>
<organism>
    <name type="scientific">Campylobacter jejuni subsp. jejuni serotype O:2 (strain ATCC 700819 / NCTC 11168)</name>
    <dbReference type="NCBI Taxonomy" id="192222"/>
    <lineage>
        <taxon>Bacteria</taxon>
        <taxon>Pseudomonadati</taxon>
        <taxon>Campylobacterota</taxon>
        <taxon>Epsilonproteobacteria</taxon>
        <taxon>Campylobacterales</taxon>
        <taxon>Campylobacteraceae</taxon>
        <taxon>Campylobacter</taxon>
    </lineage>
</organism>
<keyword id="KW-0963">Cytoplasm</keyword>
<keyword id="KW-0444">Lipid biosynthesis</keyword>
<keyword id="KW-0443">Lipid metabolism</keyword>
<keyword id="KW-0520">NAD</keyword>
<keyword id="KW-0521">NADP</keyword>
<keyword id="KW-0547">Nucleotide-binding</keyword>
<keyword id="KW-0560">Oxidoreductase</keyword>
<keyword id="KW-0594">Phospholipid biosynthesis</keyword>
<keyword id="KW-1208">Phospholipid metabolism</keyword>
<keyword id="KW-1185">Reference proteome</keyword>
<dbReference type="EC" id="1.1.1.94" evidence="1"/>
<dbReference type="EMBL" id="AL111168">
    <property type="protein sequence ID" value="CAL35311.1"/>
    <property type="status" value="ALT_INIT"/>
    <property type="molecule type" value="Genomic_DNA"/>
</dbReference>
<dbReference type="PIR" id="F81325">
    <property type="entry name" value="F81325"/>
</dbReference>
<dbReference type="RefSeq" id="YP_002344587.1">
    <property type="nucleotide sequence ID" value="NC_002163.1"/>
</dbReference>
<dbReference type="SMR" id="Q9PN99"/>
<dbReference type="IntAct" id="Q9PN99">
    <property type="interactions" value="20"/>
</dbReference>
<dbReference type="STRING" id="192222.Cj1196c"/>
<dbReference type="PaxDb" id="192222-Cj1196c"/>
<dbReference type="EnsemblBacteria" id="CAL35311">
    <property type="protein sequence ID" value="CAL35311"/>
    <property type="gene ID" value="Cj1196c"/>
</dbReference>
<dbReference type="GeneID" id="905486"/>
<dbReference type="KEGG" id="cje:Cj1196c"/>
<dbReference type="PATRIC" id="fig|192222.6.peg.1177"/>
<dbReference type="eggNOG" id="COG0240">
    <property type="taxonomic scope" value="Bacteria"/>
</dbReference>
<dbReference type="HOGENOM" id="CLU_033449_0_2_7"/>
<dbReference type="OrthoDB" id="9812273at2"/>
<dbReference type="UniPathway" id="UPA00940"/>
<dbReference type="Proteomes" id="UP000000799">
    <property type="component" value="Chromosome"/>
</dbReference>
<dbReference type="GO" id="GO:0005829">
    <property type="term" value="C:cytosol"/>
    <property type="evidence" value="ECO:0007669"/>
    <property type="project" value="TreeGrafter"/>
</dbReference>
<dbReference type="GO" id="GO:0047952">
    <property type="term" value="F:glycerol-3-phosphate dehydrogenase [NAD(P)+] activity"/>
    <property type="evidence" value="ECO:0007669"/>
    <property type="project" value="UniProtKB-UniRule"/>
</dbReference>
<dbReference type="GO" id="GO:0051287">
    <property type="term" value="F:NAD binding"/>
    <property type="evidence" value="ECO:0007669"/>
    <property type="project" value="InterPro"/>
</dbReference>
<dbReference type="GO" id="GO:0005975">
    <property type="term" value="P:carbohydrate metabolic process"/>
    <property type="evidence" value="ECO:0007669"/>
    <property type="project" value="InterPro"/>
</dbReference>
<dbReference type="GO" id="GO:0046167">
    <property type="term" value="P:glycerol-3-phosphate biosynthetic process"/>
    <property type="evidence" value="ECO:0007669"/>
    <property type="project" value="UniProtKB-UniRule"/>
</dbReference>
<dbReference type="GO" id="GO:0046168">
    <property type="term" value="P:glycerol-3-phosphate catabolic process"/>
    <property type="evidence" value="ECO:0007669"/>
    <property type="project" value="InterPro"/>
</dbReference>
<dbReference type="GO" id="GO:0006650">
    <property type="term" value="P:glycerophospholipid metabolic process"/>
    <property type="evidence" value="ECO:0007669"/>
    <property type="project" value="UniProtKB-UniRule"/>
</dbReference>
<dbReference type="GO" id="GO:0008654">
    <property type="term" value="P:phospholipid biosynthetic process"/>
    <property type="evidence" value="ECO:0007669"/>
    <property type="project" value="UniProtKB-KW"/>
</dbReference>
<dbReference type="FunFam" id="1.10.1040.10:FF:000025">
    <property type="entry name" value="Glycerol-3-phosphate dehydrogenase [NAD(P)+]"/>
    <property type="match status" value="1"/>
</dbReference>
<dbReference type="Gene3D" id="1.10.1040.10">
    <property type="entry name" value="N-(1-d-carboxylethyl)-l-norvaline Dehydrogenase, domain 2"/>
    <property type="match status" value="1"/>
</dbReference>
<dbReference type="Gene3D" id="3.40.50.720">
    <property type="entry name" value="NAD(P)-binding Rossmann-like Domain"/>
    <property type="match status" value="1"/>
</dbReference>
<dbReference type="HAMAP" id="MF_00394">
    <property type="entry name" value="NAD_Glyc3P_dehydrog"/>
    <property type="match status" value="1"/>
</dbReference>
<dbReference type="InterPro" id="IPR008927">
    <property type="entry name" value="6-PGluconate_DH-like_C_sf"/>
</dbReference>
<dbReference type="InterPro" id="IPR013328">
    <property type="entry name" value="6PGD_dom2"/>
</dbReference>
<dbReference type="InterPro" id="IPR006168">
    <property type="entry name" value="G3P_DH_NAD-dep"/>
</dbReference>
<dbReference type="InterPro" id="IPR006109">
    <property type="entry name" value="G3P_DH_NAD-dep_C"/>
</dbReference>
<dbReference type="InterPro" id="IPR011128">
    <property type="entry name" value="G3P_DH_NAD-dep_N"/>
</dbReference>
<dbReference type="InterPro" id="IPR036291">
    <property type="entry name" value="NAD(P)-bd_dom_sf"/>
</dbReference>
<dbReference type="NCBIfam" id="NF000940">
    <property type="entry name" value="PRK00094.1-2"/>
    <property type="match status" value="1"/>
</dbReference>
<dbReference type="NCBIfam" id="NF000942">
    <property type="entry name" value="PRK00094.1-4"/>
    <property type="match status" value="1"/>
</dbReference>
<dbReference type="NCBIfam" id="NF000943">
    <property type="entry name" value="PRK00094.2-1"/>
    <property type="match status" value="1"/>
</dbReference>
<dbReference type="PANTHER" id="PTHR11728">
    <property type="entry name" value="GLYCEROL-3-PHOSPHATE DEHYDROGENASE"/>
    <property type="match status" value="1"/>
</dbReference>
<dbReference type="PANTHER" id="PTHR11728:SF1">
    <property type="entry name" value="GLYCEROL-3-PHOSPHATE DEHYDROGENASE [NAD(+)] 2, CHLOROPLASTIC"/>
    <property type="match status" value="1"/>
</dbReference>
<dbReference type="Pfam" id="PF07479">
    <property type="entry name" value="NAD_Gly3P_dh_C"/>
    <property type="match status" value="1"/>
</dbReference>
<dbReference type="Pfam" id="PF01210">
    <property type="entry name" value="NAD_Gly3P_dh_N"/>
    <property type="match status" value="1"/>
</dbReference>
<dbReference type="PIRSF" id="PIRSF000114">
    <property type="entry name" value="Glycerol-3-P_dh"/>
    <property type="match status" value="1"/>
</dbReference>
<dbReference type="SUPFAM" id="SSF48179">
    <property type="entry name" value="6-phosphogluconate dehydrogenase C-terminal domain-like"/>
    <property type="match status" value="1"/>
</dbReference>
<dbReference type="SUPFAM" id="SSF51735">
    <property type="entry name" value="NAD(P)-binding Rossmann-fold domains"/>
    <property type="match status" value="1"/>
</dbReference>
<dbReference type="PROSITE" id="PS00957">
    <property type="entry name" value="NAD_G3PDH"/>
    <property type="match status" value="1"/>
</dbReference>
<accession>Q9PN99</accession>
<accession>Q0P960</accession>